<dbReference type="EMBL" id="AK030747">
    <property type="protein sequence ID" value="BAC27115.1"/>
    <property type="molecule type" value="mRNA"/>
</dbReference>
<dbReference type="EMBL" id="AK083929">
    <property type="protein sequence ID" value="BAC39070.1"/>
    <property type="molecule type" value="mRNA"/>
</dbReference>
<dbReference type="EMBL" id="AK147427">
    <property type="protein sequence ID" value="BAE27904.1"/>
    <property type="molecule type" value="mRNA"/>
</dbReference>
<dbReference type="EMBL" id="AK147788">
    <property type="protein sequence ID" value="BAE28138.1"/>
    <property type="molecule type" value="mRNA"/>
</dbReference>
<dbReference type="EMBL" id="BC103780">
    <property type="protein sequence ID" value="AAI03781.1"/>
    <property type="status" value="ALT_INIT"/>
    <property type="molecule type" value="mRNA"/>
</dbReference>
<dbReference type="CCDS" id="CCDS26770.2">
    <molecule id="Q3UHF3-1"/>
</dbReference>
<dbReference type="RefSeq" id="NP_766181.2">
    <molecule id="Q3UHF3-1"/>
    <property type="nucleotide sequence ID" value="NM_172593.3"/>
</dbReference>
<dbReference type="RefSeq" id="XP_006517680.1">
    <molecule id="Q3UHF3-2"/>
    <property type="nucleotide sequence ID" value="XM_006517617.1"/>
</dbReference>
<dbReference type="FunCoup" id="Q3UHF3">
    <property type="interactions" value="3442"/>
</dbReference>
<dbReference type="STRING" id="10090.ENSMUSP00000104895"/>
<dbReference type="iPTMnet" id="Q3UHF3"/>
<dbReference type="PhosphoSitePlus" id="Q3UHF3"/>
<dbReference type="SwissPalm" id="Q3UHF3"/>
<dbReference type="PaxDb" id="10090-ENSMUSP00000104895"/>
<dbReference type="ProteomicsDB" id="295667">
    <molecule id="Q3UHF3-1"/>
</dbReference>
<dbReference type="ProteomicsDB" id="295668">
    <molecule id="Q3UHF3-2"/>
</dbReference>
<dbReference type="Antibodypedia" id="23538">
    <property type="antibodies" value="113 antibodies from 21 providers"/>
</dbReference>
<dbReference type="DNASU" id="218613"/>
<dbReference type="Ensembl" id="ENSMUST00000047412.11">
    <molecule id="Q3UHF3-2"/>
    <property type="protein sequence ID" value="ENSMUSP00000036809.5"/>
    <property type="gene ID" value="ENSMUSG00000032727.15"/>
</dbReference>
<dbReference type="Ensembl" id="ENSMUST00000109272.9">
    <molecule id="Q3UHF3-1"/>
    <property type="protein sequence ID" value="ENSMUSP00000104895.3"/>
    <property type="gene ID" value="ENSMUSG00000032727.15"/>
</dbReference>
<dbReference type="GeneID" id="218613"/>
<dbReference type="KEGG" id="mmu:218613"/>
<dbReference type="UCSC" id="uc007rvy.1">
    <molecule id="Q3UHF3-1"/>
    <property type="organism name" value="mouse"/>
</dbReference>
<dbReference type="UCSC" id="uc007rvz.1">
    <molecule id="Q3UHF3-2"/>
    <property type="organism name" value="mouse"/>
</dbReference>
<dbReference type="AGR" id="MGI:2442317"/>
<dbReference type="CTD" id="166968"/>
<dbReference type="MGI" id="MGI:2442317">
    <property type="gene designation" value="Mier3"/>
</dbReference>
<dbReference type="VEuPathDB" id="HostDB:ENSMUSG00000032727"/>
<dbReference type="eggNOG" id="KOG4329">
    <property type="taxonomic scope" value="Eukaryota"/>
</dbReference>
<dbReference type="GeneTree" id="ENSGT01030000234573"/>
<dbReference type="HOGENOM" id="CLU_027202_2_0_1"/>
<dbReference type="InParanoid" id="Q3UHF3"/>
<dbReference type="OMA" id="PMNICSE"/>
<dbReference type="OrthoDB" id="5916873at2759"/>
<dbReference type="PhylomeDB" id="Q3UHF3"/>
<dbReference type="TreeFam" id="TF106453"/>
<dbReference type="BioGRID-ORCS" id="218613">
    <property type="hits" value="3 hits in 79 CRISPR screens"/>
</dbReference>
<dbReference type="ChiTaRS" id="Mier3">
    <property type="organism name" value="mouse"/>
</dbReference>
<dbReference type="PRO" id="PR:Q3UHF3"/>
<dbReference type="Proteomes" id="UP000000589">
    <property type="component" value="Chromosome 13"/>
</dbReference>
<dbReference type="RNAct" id="Q3UHF3">
    <property type="molecule type" value="protein"/>
</dbReference>
<dbReference type="Bgee" id="ENSMUSG00000032727">
    <property type="expression patterns" value="Expressed in spermatocyte and 241 other cell types or tissues"/>
</dbReference>
<dbReference type="ExpressionAtlas" id="Q3UHF3">
    <property type="expression patterns" value="baseline and differential"/>
</dbReference>
<dbReference type="GO" id="GO:0005654">
    <property type="term" value="C:nucleoplasm"/>
    <property type="evidence" value="ECO:0007669"/>
    <property type="project" value="Ensembl"/>
</dbReference>
<dbReference type="GO" id="GO:0032991">
    <property type="term" value="C:protein-containing complex"/>
    <property type="evidence" value="ECO:0007669"/>
    <property type="project" value="Ensembl"/>
</dbReference>
<dbReference type="CDD" id="cd11661">
    <property type="entry name" value="SANT_MTA3_like"/>
    <property type="match status" value="1"/>
</dbReference>
<dbReference type="FunFam" id="1.10.10.60:FF:000025">
    <property type="entry name" value="Mesoderm induction early response 1, transcriptional regulator"/>
    <property type="match status" value="1"/>
</dbReference>
<dbReference type="FunFam" id="4.10.1240.50:FF:000005">
    <property type="entry name" value="Mesoderm induction early response protein 3"/>
    <property type="match status" value="1"/>
</dbReference>
<dbReference type="Gene3D" id="4.10.1240.50">
    <property type="match status" value="1"/>
</dbReference>
<dbReference type="Gene3D" id="1.10.10.60">
    <property type="entry name" value="Homeodomain-like"/>
    <property type="match status" value="1"/>
</dbReference>
<dbReference type="InterPro" id="IPR000949">
    <property type="entry name" value="ELM2_dom"/>
</dbReference>
<dbReference type="InterPro" id="IPR009057">
    <property type="entry name" value="Homeodomain-like_sf"/>
</dbReference>
<dbReference type="InterPro" id="IPR040138">
    <property type="entry name" value="MIER/MTA"/>
</dbReference>
<dbReference type="InterPro" id="IPR045787">
    <property type="entry name" value="MIER1/3_C"/>
</dbReference>
<dbReference type="InterPro" id="IPR001005">
    <property type="entry name" value="SANT/Myb"/>
</dbReference>
<dbReference type="InterPro" id="IPR017884">
    <property type="entry name" value="SANT_dom"/>
</dbReference>
<dbReference type="PANTHER" id="PTHR10865:SF22">
    <property type="entry name" value="MESODERM INDUCTION EARLY RESPONSE PROTEIN 3"/>
    <property type="match status" value="1"/>
</dbReference>
<dbReference type="PANTHER" id="PTHR10865">
    <property type="entry name" value="METASTASIS-ASSOCIATED PROTEIN AND MESODERM INDUCTION EARLY RESPONSE PROTEIN"/>
    <property type="match status" value="1"/>
</dbReference>
<dbReference type="Pfam" id="PF01448">
    <property type="entry name" value="ELM2"/>
    <property type="match status" value="1"/>
</dbReference>
<dbReference type="Pfam" id="PF19426">
    <property type="entry name" value="MIER1_3_C"/>
    <property type="match status" value="1"/>
</dbReference>
<dbReference type="Pfam" id="PF00249">
    <property type="entry name" value="Myb_DNA-binding"/>
    <property type="match status" value="1"/>
</dbReference>
<dbReference type="SMART" id="SM01189">
    <property type="entry name" value="ELM2"/>
    <property type="match status" value="1"/>
</dbReference>
<dbReference type="SMART" id="SM00717">
    <property type="entry name" value="SANT"/>
    <property type="match status" value="1"/>
</dbReference>
<dbReference type="SUPFAM" id="SSF46689">
    <property type="entry name" value="Homeodomain-like"/>
    <property type="match status" value="1"/>
</dbReference>
<dbReference type="PROSITE" id="PS51156">
    <property type="entry name" value="ELM2"/>
    <property type="match status" value="1"/>
</dbReference>
<dbReference type="PROSITE" id="PS51293">
    <property type="entry name" value="SANT"/>
    <property type="match status" value="1"/>
</dbReference>
<evidence type="ECO:0000250" key="1"/>
<evidence type="ECO:0000250" key="2">
    <source>
        <dbReference type="UniProtKB" id="Q7Z3K6"/>
    </source>
</evidence>
<evidence type="ECO:0000255" key="3">
    <source>
        <dbReference type="PROSITE-ProRule" id="PRU00512"/>
    </source>
</evidence>
<evidence type="ECO:0000255" key="4">
    <source>
        <dbReference type="PROSITE-ProRule" id="PRU00624"/>
    </source>
</evidence>
<evidence type="ECO:0000256" key="5">
    <source>
        <dbReference type="SAM" id="MobiDB-lite"/>
    </source>
</evidence>
<evidence type="ECO:0000303" key="6">
    <source>
    </source>
</evidence>
<evidence type="ECO:0000305" key="7"/>
<evidence type="ECO:0007744" key="8">
    <source>
    </source>
</evidence>
<evidence type="ECO:0007744" key="9">
    <source>
    </source>
</evidence>
<feature type="chain" id="PRO_0000313682" description="Mesoderm induction early response protein 3">
    <location>
        <begin position="1"/>
        <end position="551"/>
    </location>
</feature>
<feature type="domain" description="ELM2" evidence="3">
    <location>
        <begin position="174"/>
        <end position="273"/>
    </location>
</feature>
<feature type="domain" description="SANT" evidence="4">
    <location>
        <begin position="278"/>
        <end position="330"/>
    </location>
</feature>
<feature type="region of interest" description="Disordered" evidence="5">
    <location>
        <begin position="1"/>
        <end position="62"/>
    </location>
</feature>
<feature type="region of interest" description="Disordered" evidence="5">
    <location>
        <begin position="113"/>
        <end position="169"/>
    </location>
</feature>
<feature type="compositionally biased region" description="Low complexity" evidence="5">
    <location>
        <begin position="1"/>
        <end position="16"/>
    </location>
</feature>
<feature type="compositionally biased region" description="Basic and acidic residues" evidence="5">
    <location>
        <begin position="17"/>
        <end position="36"/>
    </location>
</feature>
<feature type="compositionally biased region" description="Polar residues" evidence="5">
    <location>
        <begin position="121"/>
        <end position="134"/>
    </location>
</feature>
<feature type="compositionally biased region" description="Acidic residues" evidence="5">
    <location>
        <begin position="154"/>
        <end position="163"/>
    </location>
</feature>
<feature type="modified residue" description="Phosphoserine" evidence="2">
    <location>
        <position position="52"/>
    </location>
</feature>
<feature type="modified residue" description="Phosphoserine" evidence="2">
    <location>
        <position position="53"/>
    </location>
</feature>
<feature type="modified residue" description="Phosphoserine" evidence="9">
    <location>
        <position position="114"/>
    </location>
</feature>
<feature type="modified residue" description="Phosphoserine" evidence="9">
    <location>
        <position position="156"/>
    </location>
</feature>
<feature type="modified residue" description="Phosphothreonine" evidence="9">
    <location>
        <position position="163"/>
    </location>
</feature>
<feature type="modified residue" description="Phosphoserine" evidence="9">
    <location>
        <position position="165"/>
    </location>
</feature>
<feature type="modified residue" description="Phosphoserine" evidence="8">
    <location>
        <position position="168"/>
    </location>
</feature>
<feature type="splice variant" id="VSP_030104" description="In isoform 2." evidence="6">
    <location>
        <begin position="1"/>
        <end position="27"/>
    </location>
</feature>
<feature type="splice variant" id="VSP_030105" description="In isoform 2." evidence="6">
    <location>
        <position position="278"/>
    </location>
</feature>
<feature type="sequence conflict" description="In Ref. 2; AAI03781." evidence="7" ref="2">
    <original>S</original>
    <variation>G</variation>
    <location>
        <position position="52"/>
    </location>
</feature>
<feature type="sequence conflict" description="In Ref. 1; BAE27904." evidence="7" ref="1">
    <original>E</original>
    <variation>K</variation>
    <location>
        <position position="107"/>
    </location>
</feature>
<feature type="sequence conflict" description="In Ref. 1; BAC39070." evidence="7" ref="1">
    <original>V</original>
    <variation>L</variation>
    <location>
        <position position="310"/>
    </location>
</feature>
<proteinExistence type="evidence at protein level"/>
<reference key="1">
    <citation type="journal article" date="2005" name="Science">
        <title>The transcriptional landscape of the mammalian genome.</title>
        <authorList>
            <person name="Carninci P."/>
            <person name="Kasukawa T."/>
            <person name="Katayama S."/>
            <person name="Gough J."/>
            <person name="Frith M.C."/>
            <person name="Maeda N."/>
            <person name="Oyama R."/>
            <person name="Ravasi T."/>
            <person name="Lenhard B."/>
            <person name="Wells C."/>
            <person name="Kodzius R."/>
            <person name="Shimokawa K."/>
            <person name="Bajic V.B."/>
            <person name="Brenner S.E."/>
            <person name="Batalov S."/>
            <person name="Forrest A.R."/>
            <person name="Zavolan M."/>
            <person name="Davis M.J."/>
            <person name="Wilming L.G."/>
            <person name="Aidinis V."/>
            <person name="Allen J.E."/>
            <person name="Ambesi-Impiombato A."/>
            <person name="Apweiler R."/>
            <person name="Aturaliya R.N."/>
            <person name="Bailey T.L."/>
            <person name="Bansal M."/>
            <person name="Baxter L."/>
            <person name="Beisel K.W."/>
            <person name="Bersano T."/>
            <person name="Bono H."/>
            <person name="Chalk A.M."/>
            <person name="Chiu K.P."/>
            <person name="Choudhary V."/>
            <person name="Christoffels A."/>
            <person name="Clutterbuck D.R."/>
            <person name="Crowe M.L."/>
            <person name="Dalla E."/>
            <person name="Dalrymple B.P."/>
            <person name="de Bono B."/>
            <person name="Della Gatta G."/>
            <person name="di Bernardo D."/>
            <person name="Down T."/>
            <person name="Engstrom P."/>
            <person name="Fagiolini M."/>
            <person name="Faulkner G."/>
            <person name="Fletcher C.F."/>
            <person name="Fukushima T."/>
            <person name="Furuno M."/>
            <person name="Futaki S."/>
            <person name="Gariboldi M."/>
            <person name="Georgii-Hemming P."/>
            <person name="Gingeras T.R."/>
            <person name="Gojobori T."/>
            <person name="Green R.E."/>
            <person name="Gustincich S."/>
            <person name="Harbers M."/>
            <person name="Hayashi Y."/>
            <person name="Hensch T.K."/>
            <person name="Hirokawa N."/>
            <person name="Hill D."/>
            <person name="Huminiecki L."/>
            <person name="Iacono M."/>
            <person name="Ikeo K."/>
            <person name="Iwama A."/>
            <person name="Ishikawa T."/>
            <person name="Jakt M."/>
            <person name="Kanapin A."/>
            <person name="Katoh M."/>
            <person name="Kawasawa Y."/>
            <person name="Kelso J."/>
            <person name="Kitamura H."/>
            <person name="Kitano H."/>
            <person name="Kollias G."/>
            <person name="Krishnan S.P."/>
            <person name="Kruger A."/>
            <person name="Kummerfeld S.K."/>
            <person name="Kurochkin I.V."/>
            <person name="Lareau L.F."/>
            <person name="Lazarevic D."/>
            <person name="Lipovich L."/>
            <person name="Liu J."/>
            <person name="Liuni S."/>
            <person name="McWilliam S."/>
            <person name="Madan Babu M."/>
            <person name="Madera M."/>
            <person name="Marchionni L."/>
            <person name="Matsuda H."/>
            <person name="Matsuzawa S."/>
            <person name="Miki H."/>
            <person name="Mignone F."/>
            <person name="Miyake S."/>
            <person name="Morris K."/>
            <person name="Mottagui-Tabar S."/>
            <person name="Mulder N."/>
            <person name="Nakano N."/>
            <person name="Nakauchi H."/>
            <person name="Ng P."/>
            <person name="Nilsson R."/>
            <person name="Nishiguchi S."/>
            <person name="Nishikawa S."/>
            <person name="Nori F."/>
            <person name="Ohara O."/>
            <person name="Okazaki Y."/>
            <person name="Orlando V."/>
            <person name="Pang K.C."/>
            <person name="Pavan W.J."/>
            <person name="Pavesi G."/>
            <person name="Pesole G."/>
            <person name="Petrovsky N."/>
            <person name="Piazza S."/>
            <person name="Reed J."/>
            <person name="Reid J.F."/>
            <person name="Ring B.Z."/>
            <person name="Ringwald M."/>
            <person name="Rost B."/>
            <person name="Ruan Y."/>
            <person name="Salzberg S.L."/>
            <person name="Sandelin A."/>
            <person name="Schneider C."/>
            <person name="Schoenbach C."/>
            <person name="Sekiguchi K."/>
            <person name="Semple C.A."/>
            <person name="Seno S."/>
            <person name="Sessa L."/>
            <person name="Sheng Y."/>
            <person name="Shibata Y."/>
            <person name="Shimada H."/>
            <person name="Shimada K."/>
            <person name="Silva D."/>
            <person name="Sinclair B."/>
            <person name="Sperling S."/>
            <person name="Stupka E."/>
            <person name="Sugiura K."/>
            <person name="Sultana R."/>
            <person name="Takenaka Y."/>
            <person name="Taki K."/>
            <person name="Tammoja K."/>
            <person name="Tan S.L."/>
            <person name="Tang S."/>
            <person name="Taylor M.S."/>
            <person name="Tegner J."/>
            <person name="Teichmann S.A."/>
            <person name="Ueda H.R."/>
            <person name="van Nimwegen E."/>
            <person name="Verardo R."/>
            <person name="Wei C.L."/>
            <person name="Yagi K."/>
            <person name="Yamanishi H."/>
            <person name="Zabarovsky E."/>
            <person name="Zhu S."/>
            <person name="Zimmer A."/>
            <person name="Hide W."/>
            <person name="Bult C."/>
            <person name="Grimmond S.M."/>
            <person name="Teasdale R.D."/>
            <person name="Liu E.T."/>
            <person name="Brusic V."/>
            <person name="Quackenbush J."/>
            <person name="Wahlestedt C."/>
            <person name="Mattick J.S."/>
            <person name="Hume D.A."/>
            <person name="Kai C."/>
            <person name="Sasaki D."/>
            <person name="Tomaru Y."/>
            <person name="Fukuda S."/>
            <person name="Kanamori-Katayama M."/>
            <person name="Suzuki M."/>
            <person name="Aoki J."/>
            <person name="Arakawa T."/>
            <person name="Iida J."/>
            <person name="Imamura K."/>
            <person name="Itoh M."/>
            <person name="Kato T."/>
            <person name="Kawaji H."/>
            <person name="Kawagashira N."/>
            <person name="Kawashima T."/>
            <person name="Kojima M."/>
            <person name="Kondo S."/>
            <person name="Konno H."/>
            <person name="Nakano K."/>
            <person name="Ninomiya N."/>
            <person name="Nishio T."/>
            <person name="Okada M."/>
            <person name="Plessy C."/>
            <person name="Shibata K."/>
            <person name="Shiraki T."/>
            <person name="Suzuki S."/>
            <person name="Tagami M."/>
            <person name="Waki K."/>
            <person name="Watahiki A."/>
            <person name="Okamura-Oho Y."/>
            <person name="Suzuki H."/>
            <person name="Kawai J."/>
            <person name="Hayashizaki Y."/>
        </authorList>
    </citation>
    <scope>NUCLEOTIDE SEQUENCE [LARGE SCALE MRNA] (ISOFORMS 1 AND 2)</scope>
    <source>
        <strain>C57BL/6J</strain>
        <tissue>Brain</tissue>
        <tissue>Embryo</tissue>
        <tissue>Spinal ganglion</tissue>
    </source>
</reference>
<reference key="2">
    <citation type="journal article" date="2004" name="Genome Res.">
        <title>The status, quality, and expansion of the NIH full-length cDNA project: the Mammalian Gene Collection (MGC).</title>
        <authorList>
            <consortium name="The MGC Project Team"/>
        </authorList>
    </citation>
    <scope>NUCLEOTIDE SEQUENCE [LARGE SCALE MRNA] OF 2-551 (ISOFORM 1)</scope>
    <source>
        <strain>C57BL/6J</strain>
        <tissue>Embryo</tissue>
    </source>
</reference>
<reference key="3">
    <citation type="journal article" date="2007" name="Proc. Natl. Acad. Sci. U.S.A.">
        <title>Large-scale phosphorylation analysis of mouse liver.</title>
        <authorList>
            <person name="Villen J."/>
            <person name="Beausoleil S.A."/>
            <person name="Gerber S.A."/>
            <person name="Gygi S.P."/>
        </authorList>
    </citation>
    <scope>PHOSPHORYLATION [LARGE SCALE ANALYSIS] AT SER-168</scope>
    <scope>IDENTIFICATION BY MASS SPECTROMETRY [LARGE SCALE ANALYSIS]</scope>
    <source>
        <tissue>Liver</tissue>
    </source>
</reference>
<reference key="4">
    <citation type="journal article" date="2010" name="Cell">
        <title>A tissue-specific atlas of mouse protein phosphorylation and expression.</title>
        <authorList>
            <person name="Huttlin E.L."/>
            <person name="Jedrychowski M.P."/>
            <person name="Elias J.E."/>
            <person name="Goswami T."/>
            <person name="Rad R."/>
            <person name="Beausoleil S.A."/>
            <person name="Villen J."/>
            <person name="Haas W."/>
            <person name="Sowa M.E."/>
            <person name="Gygi S.P."/>
        </authorList>
    </citation>
    <scope>PHOSPHORYLATION [LARGE SCALE ANALYSIS] AT SER-114; SER-156; THR-163 AND SER-165</scope>
    <scope>IDENTIFICATION BY MASS SPECTROMETRY [LARGE SCALE ANALYSIS]</scope>
    <source>
        <tissue>Testis</tissue>
    </source>
</reference>
<protein>
    <recommendedName>
        <fullName>Mesoderm induction early response protein 3</fullName>
        <shortName>Mi-er3</shortName>
    </recommendedName>
</protein>
<comment type="function">
    <text evidence="1">Transcriptional repressor.</text>
</comment>
<comment type="subcellular location">
    <subcellularLocation>
        <location evidence="3 4">Nucleus</location>
    </subcellularLocation>
</comment>
<comment type="alternative products">
    <event type="alternative splicing"/>
    <isoform>
        <id>Q3UHF3-1</id>
        <name>1</name>
        <sequence type="displayed"/>
    </isoform>
    <isoform>
        <id>Q3UHF3-2</id>
        <name>2</name>
        <sequence type="described" ref="VSP_030104 VSP_030105"/>
    </isoform>
</comment>
<comment type="sequence caution" evidence="7">
    <conflict type="erroneous initiation">
        <sequence resource="EMBL-CDS" id="AAI03781"/>
    </conflict>
</comment>
<gene>
    <name type="primary">Mier3</name>
</gene>
<name>MIER3_MOUSE</name>
<keyword id="KW-0025">Alternative splicing</keyword>
<keyword id="KW-0539">Nucleus</keyword>
<keyword id="KW-0597">Phosphoprotein</keyword>
<keyword id="KW-1185">Reference proteome</keyword>
<keyword id="KW-0678">Repressor</keyword>
<keyword id="KW-0804">Transcription</keyword>
<keyword id="KW-0805">Transcription regulation</keyword>
<accession>Q3UHF3</accession>
<accession>Q3SYJ7</accession>
<accession>Q3UGR9</accession>
<accession>Q8BND7</accession>
<accession>Q8BSS0</accession>
<organism>
    <name type="scientific">Mus musculus</name>
    <name type="common">Mouse</name>
    <dbReference type="NCBI Taxonomy" id="10090"/>
    <lineage>
        <taxon>Eukaryota</taxon>
        <taxon>Metazoa</taxon>
        <taxon>Chordata</taxon>
        <taxon>Craniata</taxon>
        <taxon>Vertebrata</taxon>
        <taxon>Euteleostomi</taxon>
        <taxon>Mammalia</taxon>
        <taxon>Eutheria</taxon>
        <taxon>Euarchontoglires</taxon>
        <taxon>Glires</taxon>
        <taxon>Rodentia</taxon>
        <taxon>Myomorpha</taxon>
        <taxon>Muroidea</taxon>
        <taxon>Muridae</taxon>
        <taxon>Murinae</taxon>
        <taxon>Mus</taxon>
        <taxon>Mus</taxon>
    </lineage>
</organism>
<sequence length="551" mass="61521">MAEASFGSSSPVGSLSSEDHDFDPTAEMLVHDYDDERTLEEEELMDDGKNFSSEIEDLEKEGNMPLEDLLAFYGYESTIPAVANSSANSSPSELADELPDMTLDKEEIAKDLLSGDDEETQSSADDLTPSVTSHETSEFFPRPLRSNTTCDGDKESEIEDVETDSGNSPEDLRREIMIGLEYQAEIPPYLGEYNGDDEKAYENEDQLLWHPGVLLESKVKEYLVETSLRTGNEKVLDRISSGTHTRDNEQALYELLKCNHNIKEAIERYCCNGKASQEGMTAWTEEECRSFEHALMLHGKDFHLIQKDKVRSRTVAECVAFYYMWKKSERYDYFAQQTKFGKKRYNHHPGVTDYMDRLVDETESLGGTVSSSALTCNRPEPVPDQPLNILSSFTASDLTALTNSVATVCNPTAVNCLDDSFPPLANTPRGHVNHVPVVTEELLTLPSNGESDCFNLFETGFYHSELNPMCSEESERPAKRLKMGIAVPESFMNEVSVNNLGVDFENHTHHITSAKMAVSVADFGSLSANETNGFINAHSLHQHQHAALHSE</sequence>